<dbReference type="EMBL" id="AB046615">
    <property type="protein sequence ID" value="BAB03465.1"/>
    <property type="molecule type" value="mRNA"/>
</dbReference>
<dbReference type="EMBL" id="AB046616">
    <property type="protein sequence ID" value="BAB03466.1"/>
    <property type="molecule type" value="mRNA"/>
</dbReference>
<dbReference type="EMBL" id="AB046617">
    <property type="protein sequence ID" value="BAB03467.1"/>
    <property type="molecule type" value="mRNA"/>
</dbReference>
<dbReference type="EMBL" id="AB046618">
    <property type="protein sequence ID" value="BAB03468.1"/>
    <property type="molecule type" value="mRNA"/>
</dbReference>
<dbReference type="EMBL" id="AABR06077578">
    <property type="status" value="NOT_ANNOTATED_CDS"/>
    <property type="molecule type" value="Genomic_DNA"/>
</dbReference>
<dbReference type="EMBL" id="CH474022">
    <property type="protein sequence ID" value="EDL99590.1"/>
    <property type="molecule type" value="Genomic_DNA"/>
</dbReference>
<dbReference type="EMBL" id="X16933">
    <property type="protein sequence ID" value="CAA34808.1"/>
    <property type="molecule type" value="mRNA"/>
</dbReference>
<dbReference type="PIR" id="S09017">
    <property type="entry name" value="S09017"/>
</dbReference>
<dbReference type="RefSeq" id="NP_001076008.1">
    <molecule id="Q9JJ54-2"/>
    <property type="nucleotide sequence ID" value="NM_001082539.1"/>
</dbReference>
<dbReference type="RefSeq" id="NP_001076009.1">
    <molecule id="Q9JJ54-3"/>
    <property type="nucleotide sequence ID" value="NM_001082540.1"/>
</dbReference>
<dbReference type="RefSeq" id="NP_001076010.1">
    <molecule id="Q9JJ54-4"/>
    <property type="nucleotide sequence ID" value="NM_001082541.1"/>
</dbReference>
<dbReference type="RefSeq" id="NP_077380.2">
    <molecule id="Q9JJ54-1"/>
    <property type="nucleotide sequence ID" value="NM_024404.2"/>
</dbReference>
<dbReference type="RefSeq" id="XP_063129731.1">
    <molecule id="Q9JJ54-2"/>
    <property type="nucleotide sequence ID" value="XM_063273661.1"/>
</dbReference>
<dbReference type="SMR" id="Q9JJ54"/>
<dbReference type="BioGRID" id="249454">
    <property type="interactions" value="6"/>
</dbReference>
<dbReference type="FunCoup" id="Q9JJ54">
    <property type="interactions" value="3797"/>
</dbReference>
<dbReference type="IntAct" id="Q9JJ54">
    <property type="interactions" value="4"/>
</dbReference>
<dbReference type="MINT" id="Q9JJ54"/>
<dbReference type="STRING" id="10116.ENSRNOP00000046491"/>
<dbReference type="iPTMnet" id="Q9JJ54"/>
<dbReference type="PhosphoSitePlus" id="Q9JJ54"/>
<dbReference type="jPOST" id="Q9JJ54"/>
<dbReference type="PaxDb" id="10116-ENSRNOP00000046491"/>
<dbReference type="Ensembl" id="ENSRNOT00000003158.7">
    <molecule id="Q9JJ54-3"/>
    <property type="protein sequence ID" value="ENSRNOP00000003158.4"/>
    <property type="gene ID" value="ENSRNOG00000002292.9"/>
</dbReference>
<dbReference type="Ensembl" id="ENSRNOT00000003173.8">
    <molecule id="Q9JJ54-2"/>
    <property type="protein sequence ID" value="ENSRNOP00000003173.4"/>
    <property type="gene ID" value="ENSRNOG00000002292.9"/>
</dbReference>
<dbReference type="Ensembl" id="ENSRNOT00000047840.6">
    <molecule id="Q9JJ54-1"/>
    <property type="protein sequence ID" value="ENSRNOP00000046491.2"/>
    <property type="gene ID" value="ENSRNOG00000002292.9"/>
</dbReference>
<dbReference type="GeneID" id="79256"/>
<dbReference type="KEGG" id="rno:79256"/>
<dbReference type="UCSC" id="RGD:620365">
    <molecule id="Q9JJ54-1"/>
    <property type="organism name" value="rat"/>
</dbReference>
<dbReference type="AGR" id="RGD:620365"/>
<dbReference type="CTD" id="3184"/>
<dbReference type="RGD" id="620365">
    <property type="gene designation" value="Hnrnpd"/>
</dbReference>
<dbReference type="eggNOG" id="KOG0118">
    <property type="taxonomic scope" value="Eukaryota"/>
</dbReference>
<dbReference type="GeneTree" id="ENSGT00940000158010"/>
<dbReference type="InParanoid" id="Q9JJ54"/>
<dbReference type="OMA" id="LQDEHTI"/>
<dbReference type="OrthoDB" id="84331at9989"/>
<dbReference type="TreeFam" id="TF314808"/>
<dbReference type="Reactome" id="R-RNO-450408">
    <property type="pathway name" value="AUF1 (hnRNP D0) binds and destabilizes mRNA"/>
</dbReference>
<dbReference type="Reactome" id="R-RNO-72163">
    <property type="pathway name" value="mRNA Splicing - Major Pathway"/>
</dbReference>
<dbReference type="Reactome" id="R-RNO-72203">
    <property type="pathway name" value="Processing of Capped Intron-Containing Pre-mRNA"/>
</dbReference>
<dbReference type="PRO" id="PR:Q9JJ54"/>
<dbReference type="Proteomes" id="UP000002494">
    <property type="component" value="Chromosome 14"/>
</dbReference>
<dbReference type="Proteomes" id="UP000234681">
    <property type="component" value="Chromosome 14"/>
</dbReference>
<dbReference type="Bgee" id="ENSRNOG00000002292">
    <property type="expression patterns" value="Expressed in thymus and 20 other cell types or tissues"/>
</dbReference>
<dbReference type="GO" id="GO:0000785">
    <property type="term" value="C:chromatin"/>
    <property type="evidence" value="ECO:0000318"/>
    <property type="project" value="GO_Central"/>
</dbReference>
<dbReference type="GO" id="GO:0005829">
    <property type="term" value="C:cytosol"/>
    <property type="evidence" value="ECO:0000266"/>
    <property type="project" value="RGD"/>
</dbReference>
<dbReference type="GO" id="GO:0098978">
    <property type="term" value="C:glutamatergic synapse"/>
    <property type="evidence" value="ECO:0000314"/>
    <property type="project" value="SynGO"/>
</dbReference>
<dbReference type="GO" id="GO:0106002">
    <property type="term" value="C:mCRD-mediated mRNA stability complex"/>
    <property type="evidence" value="ECO:0000266"/>
    <property type="project" value="RGD"/>
</dbReference>
<dbReference type="GO" id="GO:0005654">
    <property type="term" value="C:nucleoplasm"/>
    <property type="evidence" value="ECO:0000318"/>
    <property type="project" value="GO_Central"/>
</dbReference>
<dbReference type="GO" id="GO:0014069">
    <property type="term" value="C:postsynaptic density"/>
    <property type="evidence" value="ECO:0000314"/>
    <property type="project" value="SynGO"/>
</dbReference>
<dbReference type="GO" id="GO:1990904">
    <property type="term" value="C:ribonucleoprotein complex"/>
    <property type="evidence" value="ECO:0000250"/>
    <property type="project" value="UniProtKB"/>
</dbReference>
<dbReference type="GO" id="GO:0045202">
    <property type="term" value="C:synapse"/>
    <property type="evidence" value="ECO:0000266"/>
    <property type="project" value="RGD"/>
</dbReference>
<dbReference type="GO" id="GO:0003682">
    <property type="term" value="F:chromatin binding"/>
    <property type="evidence" value="ECO:0000314"/>
    <property type="project" value="RGD"/>
</dbReference>
<dbReference type="GO" id="GO:0042826">
    <property type="term" value="F:histone deacetylase binding"/>
    <property type="evidence" value="ECO:0000353"/>
    <property type="project" value="RGD"/>
</dbReference>
<dbReference type="GO" id="GO:0003680">
    <property type="term" value="F:minor groove of adenine-thymine-rich DNA binding"/>
    <property type="evidence" value="ECO:0000314"/>
    <property type="project" value="RGD"/>
</dbReference>
<dbReference type="GO" id="GO:0035925">
    <property type="term" value="F:mRNA 3'-UTR AU-rich region binding"/>
    <property type="evidence" value="ECO:0000314"/>
    <property type="project" value="RGD"/>
</dbReference>
<dbReference type="GO" id="GO:0003729">
    <property type="term" value="F:mRNA binding"/>
    <property type="evidence" value="ECO:0000314"/>
    <property type="project" value="RGD"/>
</dbReference>
<dbReference type="GO" id="GO:0003723">
    <property type="term" value="F:RNA binding"/>
    <property type="evidence" value="ECO:0000250"/>
    <property type="project" value="UniProtKB"/>
</dbReference>
<dbReference type="GO" id="GO:0042162">
    <property type="term" value="F:telomeric DNA binding"/>
    <property type="evidence" value="ECO:0000250"/>
    <property type="project" value="UniProtKB"/>
</dbReference>
<dbReference type="GO" id="GO:0061158">
    <property type="term" value="P:3'-UTR-mediated mRNA destabilization"/>
    <property type="evidence" value="ECO:0000315"/>
    <property type="project" value="RGD"/>
</dbReference>
<dbReference type="GO" id="GO:0071230">
    <property type="term" value="P:cellular response to amino acid stimulus"/>
    <property type="evidence" value="ECO:0000270"/>
    <property type="project" value="RGD"/>
</dbReference>
<dbReference type="GO" id="GO:0071392">
    <property type="term" value="P:cellular response to estradiol stimulus"/>
    <property type="evidence" value="ECO:0000270"/>
    <property type="project" value="RGD"/>
</dbReference>
<dbReference type="GO" id="GO:0071732">
    <property type="term" value="P:cellular response to nitric oxide"/>
    <property type="evidence" value="ECO:0000314"/>
    <property type="project" value="RGD"/>
</dbReference>
<dbReference type="GO" id="GO:1904586">
    <property type="term" value="P:cellular response to putrescine"/>
    <property type="evidence" value="ECO:0000314"/>
    <property type="project" value="RGD"/>
</dbReference>
<dbReference type="GO" id="GO:0021549">
    <property type="term" value="P:cerebellum development"/>
    <property type="evidence" value="ECO:0000270"/>
    <property type="project" value="RGD"/>
</dbReference>
<dbReference type="GO" id="GO:0097167">
    <property type="term" value="P:circadian regulation of translation"/>
    <property type="evidence" value="ECO:0000250"/>
    <property type="project" value="UniProtKB"/>
</dbReference>
<dbReference type="GO" id="GO:0070934">
    <property type="term" value="P:CRD-mediated mRNA stabilization"/>
    <property type="evidence" value="ECO:0000266"/>
    <property type="project" value="RGD"/>
</dbReference>
<dbReference type="GO" id="GO:1990828">
    <property type="term" value="P:hepatocyte dedifferentiation"/>
    <property type="evidence" value="ECO:0000270"/>
    <property type="project" value="RGD"/>
</dbReference>
<dbReference type="GO" id="GO:0001889">
    <property type="term" value="P:liver development"/>
    <property type="evidence" value="ECO:0000270"/>
    <property type="project" value="RGD"/>
</dbReference>
<dbReference type="GO" id="GO:0010629">
    <property type="term" value="P:negative regulation of gene expression"/>
    <property type="evidence" value="ECO:0000315"/>
    <property type="project" value="RGD"/>
</dbReference>
<dbReference type="GO" id="GO:1900152">
    <property type="term" value="P:negative regulation of nuclear-transcribed mRNA catabolic process, deadenylation-dependent decay"/>
    <property type="evidence" value="ECO:0000266"/>
    <property type="project" value="RGD"/>
</dbReference>
<dbReference type="GO" id="GO:2000767">
    <property type="term" value="P:positive regulation of cytoplasmic translation"/>
    <property type="evidence" value="ECO:0000266"/>
    <property type="project" value="RGD"/>
</dbReference>
<dbReference type="GO" id="GO:0010628">
    <property type="term" value="P:positive regulation of gene expression"/>
    <property type="evidence" value="ECO:0000315"/>
    <property type="project" value="RGD"/>
</dbReference>
<dbReference type="GO" id="GO:1904355">
    <property type="term" value="P:positive regulation of telomere capping"/>
    <property type="evidence" value="ECO:0000266"/>
    <property type="project" value="RGD"/>
</dbReference>
<dbReference type="GO" id="GO:0032212">
    <property type="term" value="P:positive regulation of telomere maintenance via telomerase"/>
    <property type="evidence" value="ECO:0000266"/>
    <property type="project" value="RGD"/>
</dbReference>
<dbReference type="GO" id="GO:0045944">
    <property type="term" value="P:positive regulation of transcription by RNA polymerase II"/>
    <property type="evidence" value="ECO:0000266"/>
    <property type="project" value="RGD"/>
</dbReference>
<dbReference type="GO" id="GO:0045727">
    <property type="term" value="P:positive regulation of translation"/>
    <property type="evidence" value="ECO:0000250"/>
    <property type="project" value="UniProtKB"/>
</dbReference>
<dbReference type="GO" id="GO:0042752">
    <property type="term" value="P:regulation of circadian rhythm"/>
    <property type="evidence" value="ECO:0000250"/>
    <property type="project" value="UniProtKB"/>
</dbReference>
<dbReference type="GO" id="GO:0010468">
    <property type="term" value="P:regulation of gene expression"/>
    <property type="evidence" value="ECO:0000318"/>
    <property type="project" value="GO_Central"/>
</dbReference>
<dbReference type="GO" id="GO:0043488">
    <property type="term" value="P:regulation of mRNA stability"/>
    <property type="evidence" value="ECO:0000266"/>
    <property type="project" value="RGD"/>
</dbReference>
<dbReference type="GO" id="GO:0051592">
    <property type="term" value="P:response to calcium ion"/>
    <property type="evidence" value="ECO:0000314"/>
    <property type="project" value="RGD"/>
</dbReference>
<dbReference type="GO" id="GO:0051602">
    <property type="term" value="P:response to electrical stimulus"/>
    <property type="evidence" value="ECO:0000270"/>
    <property type="project" value="RGD"/>
</dbReference>
<dbReference type="GO" id="GO:0032355">
    <property type="term" value="P:response to estradiol"/>
    <property type="evidence" value="ECO:0000270"/>
    <property type="project" value="RGD"/>
</dbReference>
<dbReference type="GO" id="GO:1901355">
    <property type="term" value="P:response to rapamycin"/>
    <property type="evidence" value="ECO:0000314"/>
    <property type="project" value="RGD"/>
</dbReference>
<dbReference type="GO" id="GO:1904383">
    <property type="term" value="P:response to sodium phosphate"/>
    <property type="evidence" value="ECO:0000314"/>
    <property type="project" value="RGD"/>
</dbReference>
<dbReference type="CDD" id="cd12756">
    <property type="entry name" value="RRM1_hnRNPD"/>
    <property type="match status" value="1"/>
</dbReference>
<dbReference type="CDD" id="cd12583">
    <property type="entry name" value="RRM2_hnRNPD"/>
    <property type="match status" value="1"/>
</dbReference>
<dbReference type="FunFam" id="3.30.70.330:FF:000156">
    <property type="entry name" value="Heterogeneous nuclear ribonucleoprotein d0 isoform"/>
    <property type="match status" value="1"/>
</dbReference>
<dbReference type="FunFam" id="3.30.70.330:FF:000369">
    <property type="entry name" value="heterogeneous nuclear ribonucleoprotein D0 isoform X1"/>
    <property type="match status" value="1"/>
</dbReference>
<dbReference type="Gene3D" id="3.30.70.330">
    <property type="match status" value="2"/>
</dbReference>
<dbReference type="InterPro" id="IPR012956">
    <property type="entry name" value="CARG-binding_factor_N"/>
</dbReference>
<dbReference type="InterPro" id="IPR012677">
    <property type="entry name" value="Nucleotide-bd_a/b_plait_sf"/>
</dbReference>
<dbReference type="InterPro" id="IPR035979">
    <property type="entry name" value="RBD_domain_sf"/>
</dbReference>
<dbReference type="InterPro" id="IPR000504">
    <property type="entry name" value="RRM_dom"/>
</dbReference>
<dbReference type="PANTHER" id="PTHR48033:SF3">
    <property type="entry name" value="HETEROGENEOUS NUCLEAR RIBONUCLEOPROTEIN D0"/>
    <property type="match status" value="1"/>
</dbReference>
<dbReference type="PANTHER" id="PTHR48033">
    <property type="entry name" value="RNA-BINDING (RRM/RBD/RNP MOTIFS) FAMILY PROTEIN"/>
    <property type="match status" value="1"/>
</dbReference>
<dbReference type="Pfam" id="PF08143">
    <property type="entry name" value="CBFNT"/>
    <property type="match status" value="1"/>
</dbReference>
<dbReference type="Pfam" id="PF00076">
    <property type="entry name" value="RRM_1"/>
    <property type="match status" value="2"/>
</dbReference>
<dbReference type="SMART" id="SM00360">
    <property type="entry name" value="RRM"/>
    <property type="match status" value="2"/>
</dbReference>
<dbReference type="SUPFAM" id="SSF54928">
    <property type="entry name" value="RNA-binding domain, RBD"/>
    <property type="match status" value="2"/>
</dbReference>
<dbReference type="PROSITE" id="PS50102">
    <property type="entry name" value="RRM"/>
    <property type="match status" value="2"/>
</dbReference>
<evidence type="ECO:0000250" key="1">
    <source>
        <dbReference type="UniProtKB" id="Q14103"/>
    </source>
</evidence>
<evidence type="ECO:0000250" key="2">
    <source>
        <dbReference type="UniProtKB" id="Q60668"/>
    </source>
</evidence>
<evidence type="ECO:0000255" key="3">
    <source>
        <dbReference type="PROSITE-ProRule" id="PRU00176"/>
    </source>
</evidence>
<evidence type="ECO:0000256" key="4">
    <source>
        <dbReference type="SAM" id="MobiDB-lite"/>
    </source>
</evidence>
<evidence type="ECO:0000269" key="5">
    <source>
    </source>
</evidence>
<evidence type="ECO:0000303" key="6">
    <source ref="1"/>
</evidence>
<evidence type="ECO:0000305" key="7"/>
<evidence type="ECO:0007744" key="8">
    <source>
    </source>
</evidence>
<protein>
    <recommendedName>
        <fullName>Heterogeneous nuclear ribonucleoprotein D0</fullName>
        <shortName>hnRNP D0</shortName>
    </recommendedName>
    <alternativeName>
        <fullName>AU-rich element RNA-binding protein 1</fullName>
    </alternativeName>
</protein>
<accession>Q9JJ54</accession>
<accession>G3V9G2</accession>
<accession>P17132</accession>
<accession>Q9JJ51</accession>
<accession>Q9JJ52</accession>
<accession>Q9JJ53</accession>
<comment type="function">
    <text evidence="1">Binds with high affinity to RNA molecules that contain AU-rich elements (AREs) found within the 3'-UTR of many proto-oncogenes and cytokine mRNAs. Also binds to double- and single-stranded DNA sequences in a specific manner and functions a transcription factor. Each of the RNA-binding domains specifically can bind solely to a single-stranded non-monotonous 5'-UUAG-3' sequence and also weaker to the single-stranded 5'-TTAGGG-3' telomeric DNA repeat. Binds RNA oligonucleotides with 5'-UUAGGG-3' repeats more tightly than the telomeric single-stranded DNA 5'-TTAGGG-3' repeats. Binding of RRM1 to DNA inhibits the formation of DNA quadruplex structure which may play a role in telomere elongation. May be involved in translationally coupled mRNA turnover. Implicated with other RNA-binding proteins in the cytoplasmic deadenylation/translational and decay interplay of the FOS mRNA mediated by the major coding-region determinant of instability (mCRD) domain. May play a role in the regulation of the rhythmic expression of circadian clock core genes. Directly binds to the 3'UTR of CRY1 mRNA and induces CRY1 rhythmic translation. May also be involved in the regulation of PER2 translation.</text>
</comment>
<comment type="subunit">
    <text evidence="1">Identified in a IGF2BP1-dependent mRNP granule complex containing untranslated mRNAs. Part of a complex associated with the FOS mCRD domain and consisting of PABPC1, PAIP1, CSDE1/UNR and SYNCRIP. Interacts with IGF2BP2. Interacts with GTPBP1. Interacts with EIF4G1; the interaction requires RNA. Interacts with EIF3B and RPS3.</text>
</comment>
<comment type="subcellular location">
    <subcellularLocation>
        <location evidence="1">Nucleus</location>
    </subcellularLocation>
    <subcellularLocation>
        <location evidence="1">Cytoplasm</location>
    </subcellularLocation>
    <text evidence="1">Localized in cytoplasmic mRNP granules containing untranslated mRNAs. Component of ribonucleosomes. Cytoplasmic localization oscillates diurnally.</text>
</comment>
<comment type="alternative products">
    <event type="alternative splicing"/>
    <isoform>
        <id>Q9JJ54-1</id>
        <name>1</name>
        <name>p45</name>
        <sequence type="displayed"/>
    </isoform>
    <isoform>
        <id>Q9JJ54-2</id>
        <name>2</name>
        <name>p42</name>
        <sequence type="described" ref="VSP_005836"/>
    </isoform>
    <isoform>
        <id>Q9JJ54-3</id>
        <name>3</name>
        <name>p40</name>
        <sequence type="described" ref="VSP_005837"/>
    </isoform>
    <isoform>
        <id>Q9JJ54-4</id>
        <name>4</name>
        <name>p37</name>
        <sequence type="described" ref="VSP_005836 VSP_005837"/>
    </isoform>
</comment>
<comment type="PTM">
    <text evidence="5">Methylated by PRMT1, in an insulin-dependent manner. The PRMT1-mediated methylation regulates its phosphorylation.</text>
</comment>
<comment type="PTM">
    <text evidence="1">Arg-343 is dimethylated, probably to asymmetric dimethylarginine.</text>
</comment>
<gene>
    <name type="primary">Hnrnpd</name>
    <name type="synonym">Auf1</name>
    <name type="synonym">Hnrpd</name>
</gene>
<reference key="1">
    <citation type="submission" date="2000-07" db="EMBL/GenBank/DDBJ databases">
        <title>Differential expression of AUF1 isoforms in rat tissues.</title>
        <authorList>
            <person name="Arao Y."/>
            <person name="Kikuchi A."/>
        </authorList>
    </citation>
    <scope>NUCLEOTIDE SEQUENCE [MRNA] (ISOFORMS 1; 2; 3 AND 4)</scope>
    <source>
        <tissue>Kidney</tissue>
    </source>
</reference>
<reference key="2">
    <citation type="journal article" date="2004" name="Nature">
        <title>Genome sequence of the Brown Norway rat yields insights into mammalian evolution.</title>
        <authorList>
            <person name="Gibbs R.A."/>
            <person name="Weinstock G.M."/>
            <person name="Metzker M.L."/>
            <person name="Muzny D.M."/>
            <person name="Sodergren E.J."/>
            <person name="Scherer S."/>
            <person name="Scott G."/>
            <person name="Steffen D."/>
            <person name="Worley K.C."/>
            <person name="Burch P.E."/>
            <person name="Okwuonu G."/>
            <person name="Hines S."/>
            <person name="Lewis L."/>
            <person name="Deramo C."/>
            <person name="Delgado O."/>
            <person name="Dugan-Rocha S."/>
            <person name="Miner G."/>
            <person name="Morgan M."/>
            <person name="Hawes A."/>
            <person name="Gill R."/>
            <person name="Holt R.A."/>
            <person name="Adams M.D."/>
            <person name="Amanatides P.G."/>
            <person name="Baden-Tillson H."/>
            <person name="Barnstead M."/>
            <person name="Chin S."/>
            <person name="Evans C.A."/>
            <person name="Ferriera S."/>
            <person name="Fosler C."/>
            <person name="Glodek A."/>
            <person name="Gu Z."/>
            <person name="Jennings D."/>
            <person name="Kraft C.L."/>
            <person name="Nguyen T."/>
            <person name="Pfannkoch C.M."/>
            <person name="Sitter C."/>
            <person name="Sutton G.G."/>
            <person name="Venter J.C."/>
            <person name="Woodage T."/>
            <person name="Smith D."/>
            <person name="Lee H.-M."/>
            <person name="Gustafson E."/>
            <person name="Cahill P."/>
            <person name="Kana A."/>
            <person name="Doucette-Stamm L."/>
            <person name="Weinstock K."/>
            <person name="Fechtel K."/>
            <person name="Weiss R.B."/>
            <person name="Dunn D.M."/>
            <person name="Green E.D."/>
            <person name="Blakesley R.W."/>
            <person name="Bouffard G.G."/>
            <person name="De Jong P.J."/>
            <person name="Osoegawa K."/>
            <person name="Zhu B."/>
            <person name="Marra M."/>
            <person name="Schein J."/>
            <person name="Bosdet I."/>
            <person name="Fjell C."/>
            <person name="Jones S."/>
            <person name="Krzywinski M."/>
            <person name="Mathewson C."/>
            <person name="Siddiqui A."/>
            <person name="Wye N."/>
            <person name="McPherson J."/>
            <person name="Zhao S."/>
            <person name="Fraser C.M."/>
            <person name="Shetty J."/>
            <person name="Shatsman S."/>
            <person name="Geer K."/>
            <person name="Chen Y."/>
            <person name="Abramzon S."/>
            <person name="Nierman W.C."/>
            <person name="Havlak P.H."/>
            <person name="Chen R."/>
            <person name="Durbin K.J."/>
            <person name="Egan A."/>
            <person name="Ren Y."/>
            <person name="Song X.-Z."/>
            <person name="Li B."/>
            <person name="Liu Y."/>
            <person name="Qin X."/>
            <person name="Cawley S."/>
            <person name="Cooney A.J."/>
            <person name="D'Souza L.M."/>
            <person name="Martin K."/>
            <person name="Wu J.Q."/>
            <person name="Gonzalez-Garay M.L."/>
            <person name="Jackson A.R."/>
            <person name="Kalafus K.J."/>
            <person name="McLeod M.P."/>
            <person name="Milosavljevic A."/>
            <person name="Virk D."/>
            <person name="Volkov A."/>
            <person name="Wheeler D.A."/>
            <person name="Zhang Z."/>
            <person name="Bailey J.A."/>
            <person name="Eichler E.E."/>
            <person name="Tuzun E."/>
            <person name="Birney E."/>
            <person name="Mongin E."/>
            <person name="Ureta-Vidal A."/>
            <person name="Woodwark C."/>
            <person name="Zdobnov E."/>
            <person name="Bork P."/>
            <person name="Suyama M."/>
            <person name="Torrents D."/>
            <person name="Alexandersson M."/>
            <person name="Trask B.J."/>
            <person name="Young J.M."/>
            <person name="Huang H."/>
            <person name="Wang H."/>
            <person name="Xing H."/>
            <person name="Daniels S."/>
            <person name="Gietzen D."/>
            <person name="Schmidt J."/>
            <person name="Stevens K."/>
            <person name="Vitt U."/>
            <person name="Wingrove J."/>
            <person name="Camara F."/>
            <person name="Mar Alba M."/>
            <person name="Abril J.F."/>
            <person name="Guigo R."/>
            <person name="Smit A."/>
            <person name="Dubchak I."/>
            <person name="Rubin E.M."/>
            <person name="Couronne O."/>
            <person name="Poliakov A."/>
            <person name="Huebner N."/>
            <person name="Ganten D."/>
            <person name="Goesele C."/>
            <person name="Hummel O."/>
            <person name="Kreitler T."/>
            <person name="Lee Y.-A."/>
            <person name="Monti J."/>
            <person name="Schulz H."/>
            <person name="Zimdahl H."/>
            <person name="Himmelbauer H."/>
            <person name="Lehrach H."/>
            <person name="Jacob H.J."/>
            <person name="Bromberg S."/>
            <person name="Gullings-Handley J."/>
            <person name="Jensen-Seaman M.I."/>
            <person name="Kwitek A.E."/>
            <person name="Lazar J."/>
            <person name="Pasko D."/>
            <person name="Tonellato P.J."/>
            <person name="Twigger S."/>
            <person name="Ponting C.P."/>
            <person name="Duarte J.M."/>
            <person name="Rice S."/>
            <person name="Goodstadt L."/>
            <person name="Beatson S.A."/>
            <person name="Emes R.D."/>
            <person name="Winter E.E."/>
            <person name="Webber C."/>
            <person name="Brandt P."/>
            <person name="Nyakatura G."/>
            <person name="Adetobi M."/>
            <person name="Chiaromonte F."/>
            <person name="Elnitski L."/>
            <person name="Eswara P."/>
            <person name="Hardison R.C."/>
            <person name="Hou M."/>
            <person name="Kolbe D."/>
            <person name="Makova K."/>
            <person name="Miller W."/>
            <person name="Nekrutenko A."/>
            <person name="Riemer C."/>
            <person name="Schwartz S."/>
            <person name="Taylor J."/>
            <person name="Yang S."/>
            <person name="Zhang Y."/>
            <person name="Lindpaintner K."/>
            <person name="Andrews T.D."/>
            <person name="Caccamo M."/>
            <person name="Clamp M."/>
            <person name="Clarke L."/>
            <person name="Curwen V."/>
            <person name="Durbin R.M."/>
            <person name="Eyras E."/>
            <person name="Searle S.M."/>
            <person name="Cooper G.M."/>
            <person name="Batzoglou S."/>
            <person name="Brudno M."/>
            <person name="Sidow A."/>
            <person name="Stone E.A."/>
            <person name="Payseur B.A."/>
            <person name="Bourque G."/>
            <person name="Lopez-Otin C."/>
            <person name="Puente X.S."/>
            <person name="Chakrabarti K."/>
            <person name="Chatterji S."/>
            <person name="Dewey C."/>
            <person name="Pachter L."/>
            <person name="Bray N."/>
            <person name="Yap V.B."/>
            <person name="Caspi A."/>
            <person name="Tesler G."/>
            <person name="Pevzner P.A."/>
            <person name="Haussler D."/>
            <person name="Roskin K.M."/>
            <person name="Baertsch R."/>
            <person name="Clawson H."/>
            <person name="Furey T.S."/>
            <person name="Hinrichs A.S."/>
            <person name="Karolchik D."/>
            <person name="Kent W.J."/>
            <person name="Rosenbloom K.R."/>
            <person name="Trumbower H."/>
            <person name="Weirauch M."/>
            <person name="Cooper D.N."/>
            <person name="Stenson P.D."/>
            <person name="Ma B."/>
            <person name="Brent M."/>
            <person name="Arumugam M."/>
            <person name="Shteynberg D."/>
            <person name="Copley R.R."/>
            <person name="Taylor M.S."/>
            <person name="Riethman H."/>
            <person name="Mudunuri U."/>
            <person name="Peterson J."/>
            <person name="Guyer M."/>
            <person name="Felsenfeld A."/>
            <person name="Old S."/>
            <person name="Mockrin S."/>
            <person name="Collins F.S."/>
        </authorList>
    </citation>
    <scope>NUCLEOTIDE SEQUENCE [LARGE SCALE GENOMIC DNA]</scope>
    <source>
        <strain>Brown Norway</strain>
    </source>
</reference>
<reference key="3">
    <citation type="submission" date="2005-07" db="EMBL/GenBank/DDBJ databases">
        <authorList>
            <person name="Mural R.J."/>
            <person name="Adams M.D."/>
            <person name="Myers E.W."/>
            <person name="Smith H.O."/>
            <person name="Venter J.C."/>
        </authorList>
    </citation>
    <scope>NUCLEOTIDE SEQUENCE [LARGE SCALE GENOMIC DNA]</scope>
    <source>
        <strain>Brown Norway</strain>
    </source>
</reference>
<reference key="4">
    <citation type="journal article" date="1990" name="Biochim. Biophys. Acta">
        <title>Cloning of the nucleic acid-binding domain of the rat HnRNP C-type protein.</title>
        <authorList>
            <person name="Sharp Z.D."/>
            <person name="Smith K.P."/>
            <person name="Cao Z."/>
            <person name="Helsel S."/>
        </authorList>
    </citation>
    <scope>NUCLEOTIDE SEQUENCE [MRNA] OF 147-304 (ISOFORMS 3/4)</scope>
    <source>
        <tissue>Pituitary</tissue>
    </source>
</reference>
<reference key="5">
    <citation type="journal article" date="2006" name="J. Proteome Res.">
        <title>Phosphoproteomic analysis of rat liver by high capacity IMAC and LC-MS/MS.</title>
        <authorList>
            <person name="Moser K."/>
            <person name="White F.M."/>
        </authorList>
    </citation>
    <scope>IDENTIFICATION BY MASS SPECTROMETRY [LARGE SCALE ANALYSIS]</scope>
</reference>
<reference key="6">
    <citation type="journal article" date="2008" name="Biochem. Biophys. Res. Commun.">
        <title>Involvement of PRMT1 in hnRNPQ activation and internalization of insulin receptor.</title>
        <authorList>
            <person name="Iwasaki H."/>
        </authorList>
    </citation>
    <scope>METHYLATION</scope>
</reference>
<reference key="7">
    <citation type="journal article" date="2012" name="Nat. Commun.">
        <title>Quantitative maps of protein phosphorylation sites across 14 different rat organs and tissues.</title>
        <authorList>
            <person name="Lundby A."/>
            <person name="Secher A."/>
            <person name="Lage K."/>
            <person name="Nordsborg N.B."/>
            <person name="Dmytriyev A."/>
            <person name="Lundby C."/>
            <person name="Olsen J.V."/>
        </authorList>
    </citation>
    <scope>PHOSPHORYLATION [LARGE SCALE ANALYSIS] AT SER-78; SER-81 AND SER-188</scope>
    <scope>IDENTIFICATION BY MASS SPECTROMETRY [LARGE SCALE ANALYSIS]</scope>
</reference>
<feature type="initiator methionine" description="Removed" evidence="1">
    <location>
        <position position="1"/>
    </location>
</feature>
<feature type="chain" id="PRO_0000081851" description="Heterogeneous nuclear ribonucleoprotein D0">
    <location>
        <begin position="2"/>
        <end position="353"/>
    </location>
</feature>
<feature type="domain" description="RRM 1" evidence="3">
    <location>
        <begin position="95"/>
        <end position="177"/>
    </location>
</feature>
<feature type="domain" description="RRM 2" evidence="3">
    <location>
        <begin position="180"/>
        <end position="259"/>
    </location>
</feature>
<feature type="region of interest" description="Disordered" evidence="4">
    <location>
        <begin position="1"/>
        <end position="89"/>
    </location>
</feature>
<feature type="compositionally biased region" description="Low complexity" evidence="4">
    <location>
        <begin position="11"/>
        <end position="42"/>
    </location>
</feature>
<feature type="compositionally biased region" description="Gly residues" evidence="4">
    <location>
        <begin position="43"/>
        <end position="56"/>
    </location>
</feature>
<feature type="compositionally biased region" description="Basic and acidic residues" evidence="4">
    <location>
        <begin position="62"/>
        <end position="71"/>
    </location>
</feature>
<feature type="modified residue" description="N-acetylserine" evidence="1">
    <location>
        <position position="2"/>
    </location>
</feature>
<feature type="modified residue" description="Phosphoserine" evidence="1">
    <location>
        <position position="69"/>
    </location>
</feature>
<feature type="modified residue" description="Phosphoserine" evidence="8">
    <location>
        <position position="78"/>
    </location>
</feature>
<feature type="modified residue" description="Phosphoserine" evidence="1">
    <location>
        <position position="80"/>
    </location>
</feature>
<feature type="modified residue" description="Phosphoserine" evidence="8">
    <location>
        <position position="81"/>
    </location>
</feature>
<feature type="modified residue" description="Phosphothreonine" evidence="1">
    <location>
        <position position="89"/>
    </location>
</feature>
<feature type="modified residue" description="N6-methyllysine" evidence="1">
    <location>
        <position position="117"/>
    </location>
</feature>
<feature type="modified residue" description="Phosphothreonine" evidence="1">
    <location>
        <position position="125"/>
    </location>
</feature>
<feature type="modified residue" description="N6-acetyllysine" evidence="1">
    <location>
        <position position="163"/>
    </location>
</feature>
<feature type="modified residue" description="Phosphoserine" evidence="8">
    <location>
        <position position="188"/>
    </location>
</feature>
<feature type="modified residue" description="Phosphothreonine" evidence="1">
    <location>
        <position position="191"/>
    </location>
</feature>
<feature type="modified residue" description="N6-acetyllysine" evidence="2">
    <location>
        <position position="241"/>
    </location>
</feature>
<feature type="modified residue" description="N6-acetyllysine" evidence="1">
    <location>
        <position position="249"/>
    </location>
</feature>
<feature type="modified residue" description="Phosphoserine" evidence="1">
    <location>
        <position position="269"/>
    </location>
</feature>
<feature type="modified residue" description="Omega-N-methylarginine" evidence="1">
    <location>
        <position position="270"/>
    </location>
</feature>
<feature type="modified residue" description="Omega-N-methylarginine" evidence="1">
    <location>
        <position position="276"/>
    </location>
</feature>
<feature type="modified residue" description="Omega-N-methylarginine" evidence="1">
    <location>
        <position position="278"/>
    </location>
</feature>
<feature type="modified residue" description="Omega-N-methylarginine" evidence="2">
    <location>
        <position position="280"/>
    </location>
</feature>
<feature type="modified residue" description="Asymmetric dimethylarginine; alternate" evidence="2">
    <location>
        <position position="343"/>
    </location>
</feature>
<feature type="modified residue" description="Dimethylated arginine; alternate" evidence="1">
    <location>
        <position position="343"/>
    </location>
</feature>
<feature type="modified residue" description="Omega-N-methylarginine; alternate" evidence="1">
    <location>
        <position position="343"/>
    </location>
</feature>
<feature type="cross-link" description="Glycyl lysine isopeptide (Lys-Gly) (interchain with G-Cter in SUMO2)" evidence="1">
    <location>
        <position position="70"/>
    </location>
</feature>
<feature type="cross-link" description="Glycyl lysine isopeptide (Lys-Gly) (interchain with G-Cter in SUMO2)" evidence="1">
    <location>
        <position position="127"/>
    </location>
</feature>
<feature type="cross-link" description="Glycyl lysine isopeptide (Lys-Gly) (interchain with G-Cter in SUMO2)" evidence="1">
    <location>
        <position position="195"/>
    </location>
</feature>
<feature type="splice variant" id="VSP_005836" description="In isoform 2 and isoform 4." evidence="6">
    <location>
        <begin position="77"/>
        <end position="95"/>
    </location>
</feature>
<feature type="splice variant" id="VSP_005837" description="In isoform 3 and isoform 4." evidence="6">
    <original>GPSQNWNQGYSNYWNQGYGSYGYNSQGYGGYGGYDYTGYNSYYGYGDYSN</original>
    <variation>D</variation>
    <location>
        <begin position="283"/>
        <end position="332"/>
    </location>
</feature>
<feature type="sequence conflict" description="In Ref. 1; BAB03465/BAB03466/BAB03467/BAB03468." evidence="7" ref="1">
    <original>P</original>
    <variation>A</variation>
    <location>
        <position position="51"/>
    </location>
</feature>
<sequence>MSEEQFGGDGAAAAATAAVGGSAGEQEGAMVAAAQGAAAAAGSGSGGGSAPGGTEGGSTEAEGAKIDASKNEEDEGHSNSSPRHTEAATAQREEWKMFIGGLSWDTTKKDLKDYFSKFGDVVDCTLKLDPITGRSRGFGFVLFKESESVDKVMDQKEHKLNGKVIDPKRAKAMKTKEPVKKIFVGGLSPDTPEEKIREYFGGFGEVESIELPMDNKTNKRRGFCFITFKEEEPVKKIMEKKYHNVGLSKCEIKVAMSKEQYQQQQQWGSRGGFAGRARGRGGGPSQNWNQGYSNYWNQGYGSYGYNSQGYGGYGGYDYTGYNSYYGYGDYSNQQSGYGKVSRRGGHQNSYKPY</sequence>
<name>HNRPD_RAT</name>
<organism>
    <name type="scientific">Rattus norvegicus</name>
    <name type="common">Rat</name>
    <dbReference type="NCBI Taxonomy" id="10116"/>
    <lineage>
        <taxon>Eukaryota</taxon>
        <taxon>Metazoa</taxon>
        <taxon>Chordata</taxon>
        <taxon>Craniata</taxon>
        <taxon>Vertebrata</taxon>
        <taxon>Euteleostomi</taxon>
        <taxon>Mammalia</taxon>
        <taxon>Eutheria</taxon>
        <taxon>Euarchontoglires</taxon>
        <taxon>Glires</taxon>
        <taxon>Rodentia</taxon>
        <taxon>Myomorpha</taxon>
        <taxon>Muroidea</taxon>
        <taxon>Muridae</taxon>
        <taxon>Murinae</taxon>
        <taxon>Rattus</taxon>
    </lineage>
</organism>
<keyword id="KW-0007">Acetylation</keyword>
<keyword id="KW-0025">Alternative splicing</keyword>
<keyword id="KW-0090">Biological rhythms</keyword>
<keyword id="KW-0963">Cytoplasm</keyword>
<keyword id="KW-1017">Isopeptide bond</keyword>
<keyword id="KW-0488">Methylation</keyword>
<keyword id="KW-0539">Nucleus</keyword>
<keyword id="KW-0597">Phosphoprotein</keyword>
<keyword id="KW-1185">Reference proteome</keyword>
<keyword id="KW-0677">Repeat</keyword>
<keyword id="KW-0687">Ribonucleoprotein</keyword>
<keyword id="KW-0694">RNA-binding</keyword>
<keyword id="KW-0832">Ubl conjugation</keyword>
<proteinExistence type="evidence at protein level"/>